<reference key="1">
    <citation type="submission" date="2005-03" db="EMBL/GenBank/DDBJ databases">
        <authorList>
            <consortium name="NIH - Zebrafish Gene Collection (ZGC) project"/>
        </authorList>
    </citation>
    <scope>NUCLEOTIDE SEQUENCE [LARGE SCALE MRNA]</scope>
    <source>
        <tissue>Olfactory epithelium</tissue>
    </source>
</reference>
<organism>
    <name type="scientific">Danio rerio</name>
    <name type="common">Zebrafish</name>
    <name type="synonym">Brachydanio rerio</name>
    <dbReference type="NCBI Taxonomy" id="7955"/>
    <lineage>
        <taxon>Eukaryota</taxon>
        <taxon>Metazoa</taxon>
        <taxon>Chordata</taxon>
        <taxon>Craniata</taxon>
        <taxon>Vertebrata</taxon>
        <taxon>Euteleostomi</taxon>
        <taxon>Actinopterygii</taxon>
        <taxon>Neopterygii</taxon>
        <taxon>Teleostei</taxon>
        <taxon>Ostariophysi</taxon>
        <taxon>Cypriniformes</taxon>
        <taxon>Danionidae</taxon>
        <taxon>Danioninae</taxon>
        <taxon>Danio</taxon>
    </lineage>
</organism>
<dbReference type="EMBL" id="BC091542">
    <property type="protein sequence ID" value="AAH91542.1"/>
    <property type="molecule type" value="mRNA"/>
</dbReference>
<dbReference type="RefSeq" id="NP_001087196.1">
    <property type="nucleotide sequence ID" value="NM_001093727.1"/>
</dbReference>
<dbReference type="SMR" id="Q5BJC1"/>
<dbReference type="FunCoup" id="Q5BJC1">
    <property type="interactions" value="8"/>
</dbReference>
<dbReference type="STRING" id="7955.ENSDARP00000095888"/>
<dbReference type="PaxDb" id="7955-ENSDARP00000095888"/>
<dbReference type="Ensembl" id="ENSDART00000105117">
    <property type="protein sequence ID" value="ENSDARP00000095888"/>
    <property type="gene ID" value="ENSDARG00000071203"/>
</dbReference>
<dbReference type="GeneID" id="541337"/>
<dbReference type="KEGG" id="dre:541337"/>
<dbReference type="AGR" id="ZFIN:ZDB-GENE-050320-26"/>
<dbReference type="CTD" id="171546"/>
<dbReference type="ZFIN" id="ZDB-GENE-050320-26">
    <property type="gene designation" value="sptssa"/>
</dbReference>
<dbReference type="eggNOG" id="ENOG502S4Q3">
    <property type="taxonomic scope" value="Eukaryota"/>
</dbReference>
<dbReference type="HOGENOM" id="CLU_187811_1_0_1"/>
<dbReference type="InParanoid" id="Q5BJC1"/>
<dbReference type="OMA" id="LEPVERW"/>
<dbReference type="OrthoDB" id="202672at2759"/>
<dbReference type="PhylomeDB" id="Q5BJC1"/>
<dbReference type="TreeFam" id="TF328418"/>
<dbReference type="Reactome" id="R-DRE-1660661">
    <property type="pathway name" value="Sphingolipid de novo biosynthesis"/>
</dbReference>
<dbReference type="UniPathway" id="UPA00222"/>
<dbReference type="PRO" id="PR:Q5BJC1"/>
<dbReference type="Proteomes" id="UP000000437">
    <property type="component" value="Chromosome 17"/>
</dbReference>
<dbReference type="Bgee" id="ENSDARG00000071203">
    <property type="expression patterns" value="Expressed in intestine and 26 other cell types or tissues"/>
</dbReference>
<dbReference type="GO" id="GO:0005789">
    <property type="term" value="C:endoplasmic reticulum membrane"/>
    <property type="evidence" value="ECO:0007669"/>
    <property type="project" value="UniProtKB-SubCell"/>
</dbReference>
<dbReference type="GO" id="GO:0017059">
    <property type="term" value="C:serine palmitoyltransferase complex"/>
    <property type="evidence" value="ECO:0000250"/>
    <property type="project" value="UniProtKB"/>
</dbReference>
<dbReference type="GO" id="GO:0046513">
    <property type="term" value="P:ceramide biosynthetic process"/>
    <property type="evidence" value="ECO:0000318"/>
    <property type="project" value="GO_Central"/>
</dbReference>
<dbReference type="InterPro" id="IPR024512">
    <property type="entry name" value="Ser_palmitoyltrfase_ssu-like"/>
</dbReference>
<dbReference type="InterPro" id="IPR051900">
    <property type="entry name" value="SPT_small_subunit"/>
</dbReference>
<dbReference type="PANTHER" id="PTHR47084">
    <property type="entry name" value="SERINE PALMITOYLTRANSFERASE SMALL SUBUNIT A"/>
    <property type="match status" value="1"/>
</dbReference>
<dbReference type="PANTHER" id="PTHR47084:SF1">
    <property type="entry name" value="SERINE PALMITOYLTRANSFERASE SMALL SUBUNIT A"/>
    <property type="match status" value="1"/>
</dbReference>
<dbReference type="Pfam" id="PF11779">
    <property type="entry name" value="SPT_ssu-like"/>
    <property type="match status" value="1"/>
</dbReference>
<gene>
    <name type="primary">sptssa</name>
    <name type="synonym">ssspta</name>
    <name type="ORF">zgc:112487</name>
</gene>
<proteinExistence type="inferred from homology"/>
<protein>
    <recommendedName>
        <fullName>Serine palmitoyltransferase small subunit A</fullName>
    </recommendedName>
    <alternativeName>
        <fullName>Small subunit of serine palmitoyltransferase A</fullName>
        <shortName>ssSPTa</shortName>
    </alternativeName>
</protein>
<accession>Q5BJC1</accession>
<comment type="function">
    <text evidence="1">Component of the serine palmitoyltransferase multisubunit enzyme (SPT) that catalyzes the initial and rate-limiting step in sphingolipid biosynthesis by condensing L-serine and activated acyl-CoA (most commonly palmitoyl-CoA) to form long-chain bases. The SPT complex is composed of SPTLC1, SPTLC2 or SPTLC3 and SPTSSA or SPTSSB. Within this complex, the heterodimer consisting of SPTLC1 and SPTLC2/SPTLC3 forms the catalytic core. Within the SPT complex, SPTSSA stimulates the catalytic activity and plays a role in substrate specificity, which depends upon the overall complex composition. The SPTLC1-SPTLC2-SPTSSA complex shows a strong preference for C16-CoA substrate, while the SPTLC1-SPTLC3-SPTSSA isozyme uses both C14-CoA and C16-CoA as substrates, with a slight preference for C14-CoA. Independently of its action as a SPT component, may be involved in MBOAT7 localization to mitochondria-associated membranes, a membrane bridge between the endoplasmic reticulum and mitochondria, may hence affect MBOAT7-catalyzed incorporation of arachidonic acid into phosphatidylinositol.</text>
</comment>
<comment type="pathway">
    <text>Lipid metabolism; sphingolipid metabolism.</text>
</comment>
<comment type="subunit">
    <text evidence="1">Component of the serine palmitoyltransferase (SPT) complex, which is composed of SPTLC1, SPTLC2 or SPTLC3 and SPTSSA or SPTSSB. The heterodimer consisting of SPTLC1 and SPTLC2/SPTLC3 forms the catalytic core of the enzyme, while SPTSSA or SPTSSB subunits determine substrate specificity. SPT also interacts with ORMDL proteins, especially ORMDL3, which negatively regulate SPT activity in the presence of ceramides.</text>
</comment>
<comment type="subcellular location">
    <subcellularLocation>
        <location evidence="3">Endoplasmic reticulum membrane</location>
        <topology evidence="3">Multi-pass membrane protein</topology>
    </subcellularLocation>
</comment>
<comment type="similarity">
    <text evidence="3">Belongs to the SPTSS family. SPTSSA subfamily.</text>
</comment>
<evidence type="ECO:0000250" key="1">
    <source>
        <dbReference type="UniProtKB" id="Q969W0"/>
    </source>
</evidence>
<evidence type="ECO:0000255" key="2"/>
<evidence type="ECO:0000305" key="3"/>
<feature type="chain" id="PRO_0000293705" description="Serine palmitoyltransferase small subunit A">
    <location>
        <begin position="1"/>
        <end position="68"/>
    </location>
</feature>
<feature type="topological domain" description="Cytoplasmic" evidence="2">
    <location>
        <begin position="1"/>
        <end position="9"/>
    </location>
</feature>
<feature type="transmembrane region" description="Helical" evidence="2">
    <location>
        <begin position="10"/>
        <end position="26"/>
    </location>
</feature>
<feature type="topological domain" description="Lumenal" evidence="2">
    <location>
        <begin position="27"/>
        <end position="31"/>
    </location>
</feature>
<feature type="transmembrane region" description="Helical" evidence="2">
    <location>
        <begin position="32"/>
        <end position="54"/>
    </location>
</feature>
<feature type="topological domain" description="Cytoplasmic" evidence="2">
    <location>
        <begin position="55"/>
        <end position="68"/>
    </location>
</feature>
<feature type="site" description="Within the serine palmitoyltransferase (SPT) complex, defines the length of the acyl chain-binding pocket, determining the acyl-CoA substrate preference" evidence="1">
    <location>
        <position position="25"/>
    </location>
</feature>
<name>SPTSA_DANRE</name>
<keyword id="KW-0256">Endoplasmic reticulum</keyword>
<keyword id="KW-0443">Lipid metabolism</keyword>
<keyword id="KW-0472">Membrane</keyword>
<keyword id="KW-1185">Reference proteome</keyword>
<keyword id="KW-0746">Sphingolipid metabolism</keyword>
<keyword id="KW-0812">Transmembrane</keyword>
<keyword id="KW-1133">Transmembrane helix</keyword>
<sequence length="68" mass="8122">MAFGDAWKQLSWFYYQYLLVTALYMLEPWERTIFNSLLISVAAMAVYTGYVFMPQHIMAILHYFEVVQ</sequence>